<reference key="1">
    <citation type="submission" date="2008-02" db="EMBL/GenBank/DDBJ databases">
        <title>Complete sequence of Escherichia coli C str. ATCC 8739.</title>
        <authorList>
            <person name="Copeland A."/>
            <person name="Lucas S."/>
            <person name="Lapidus A."/>
            <person name="Glavina del Rio T."/>
            <person name="Dalin E."/>
            <person name="Tice H."/>
            <person name="Bruce D."/>
            <person name="Goodwin L."/>
            <person name="Pitluck S."/>
            <person name="Kiss H."/>
            <person name="Brettin T."/>
            <person name="Detter J.C."/>
            <person name="Han C."/>
            <person name="Kuske C.R."/>
            <person name="Schmutz J."/>
            <person name="Larimer F."/>
            <person name="Land M."/>
            <person name="Hauser L."/>
            <person name="Kyrpides N."/>
            <person name="Mikhailova N."/>
            <person name="Ingram L."/>
            <person name="Richardson P."/>
        </authorList>
    </citation>
    <scope>NUCLEOTIDE SEQUENCE [LARGE SCALE GENOMIC DNA]</scope>
    <source>
        <strain>ATCC 8739 / DSM 1576 / NBRC 3972 / NCIMB 8545 / WDCM 00012 / Crooks</strain>
    </source>
</reference>
<name>DXS_ECOLC</name>
<comment type="function">
    <text evidence="1">Catalyzes the acyloin condensation reaction between C atoms 2 and 3 of pyruvate and glyceraldehyde 3-phosphate to yield 1-deoxy-D-xylulose-5-phosphate (DXP).</text>
</comment>
<comment type="catalytic activity">
    <reaction evidence="1">
        <text>D-glyceraldehyde 3-phosphate + pyruvate + H(+) = 1-deoxy-D-xylulose 5-phosphate + CO2</text>
        <dbReference type="Rhea" id="RHEA:12605"/>
        <dbReference type="ChEBI" id="CHEBI:15361"/>
        <dbReference type="ChEBI" id="CHEBI:15378"/>
        <dbReference type="ChEBI" id="CHEBI:16526"/>
        <dbReference type="ChEBI" id="CHEBI:57792"/>
        <dbReference type="ChEBI" id="CHEBI:59776"/>
        <dbReference type="EC" id="2.2.1.7"/>
    </reaction>
</comment>
<comment type="cofactor">
    <cofactor evidence="1">
        <name>Mg(2+)</name>
        <dbReference type="ChEBI" id="CHEBI:18420"/>
    </cofactor>
    <text evidence="1">Binds 1 Mg(2+) ion per subunit.</text>
</comment>
<comment type="cofactor">
    <cofactor evidence="1">
        <name>thiamine diphosphate</name>
        <dbReference type="ChEBI" id="CHEBI:58937"/>
    </cofactor>
    <text evidence="1">Binds 1 thiamine pyrophosphate per subunit.</text>
</comment>
<comment type="pathway">
    <text evidence="1">Metabolic intermediate biosynthesis; 1-deoxy-D-xylulose 5-phosphate biosynthesis; 1-deoxy-D-xylulose 5-phosphate from D-glyceraldehyde 3-phosphate and pyruvate: step 1/1.</text>
</comment>
<comment type="subunit">
    <text evidence="1">Homodimer.</text>
</comment>
<comment type="similarity">
    <text evidence="1">Belongs to the transketolase family. DXPS subfamily.</text>
</comment>
<sequence length="620" mass="67589">MSFDIAKYPTLALVDSTQELRLLPKESLPKLCDELRRYLLDSVSRSSGHFASGLGTVELTVALHYVYNTPFDQLIWDVGHQAYPHKILTGRRDKIGTIRQKGGLHPFPWRGESEYDVLSVGHSSTSISAGIGIAVAAEKEGKNRRTVCVIGDGAITAGMAFEAMNHAGDIRPDMLVVLNDNEMSISENVGALNNHLAQLLSGKLYSSLREGGKKVFSGVPPIKELLKRTEEHIKGMVVPGTLFEELGFNYIGPVDGHDVLGLITTLKNMRDLKGPQFLHIMTKKGRGYEPAEKDPITFHAVPKFDPSSGCLPKSSGGLPSYSKIFGDWLCETAAKDNKLMAITPAMREGSGMVEFSRKFPDRYFDVAIAEQHAVTFAAGLAIGGYKPIVAIYSTFLQRAYDQVLHDVAIQKLPVLFAIDRAGIVGADGQTHQGAFDLSYLRCIPEMVIMTPSDENECRQMLYTGYHYNDGPSAVRYPRGNAVGVELTPLEKLPIGKGIVKRRGEKLAILNFGTLMPDAAKVAESLNATLVDMRFVKPLDEALILEMAASHEALVTVEENAIMGGAGSGVNEVLMAHRKPVPVLNIGLPDFFIPQGTQEEMRAELGLDAAGMEAKIKAWLA</sequence>
<organism>
    <name type="scientific">Escherichia coli (strain ATCC 8739 / DSM 1576 / NBRC 3972 / NCIMB 8545 / WDCM 00012 / Crooks)</name>
    <dbReference type="NCBI Taxonomy" id="481805"/>
    <lineage>
        <taxon>Bacteria</taxon>
        <taxon>Pseudomonadati</taxon>
        <taxon>Pseudomonadota</taxon>
        <taxon>Gammaproteobacteria</taxon>
        <taxon>Enterobacterales</taxon>
        <taxon>Enterobacteriaceae</taxon>
        <taxon>Escherichia</taxon>
    </lineage>
</organism>
<dbReference type="EC" id="2.2.1.7" evidence="1"/>
<dbReference type="EMBL" id="CP000946">
    <property type="protein sequence ID" value="ACA78835.1"/>
    <property type="molecule type" value="Genomic_DNA"/>
</dbReference>
<dbReference type="RefSeq" id="WP_000006806.1">
    <property type="nucleotide sequence ID" value="NZ_MTFT01000010.1"/>
</dbReference>
<dbReference type="SMR" id="B1J029"/>
<dbReference type="KEGG" id="ecl:EcolC_3213"/>
<dbReference type="HOGENOM" id="CLU_009227_1_4_6"/>
<dbReference type="UniPathway" id="UPA00064">
    <property type="reaction ID" value="UER00091"/>
</dbReference>
<dbReference type="GO" id="GO:0005829">
    <property type="term" value="C:cytosol"/>
    <property type="evidence" value="ECO:0007669"/>
    <property type="project" value="TreeGrafter"/>
</dbReference>
<dbReference type="GO" id="GO:0008661">
    <property type="term" value="F:1-deoxy-D-xylulose-5-phosphate synthase activity"/>
    <property type="evidence" value="ECO:0007669"/>
    <property type="project" value="UniProtKB-UniRule"/>
</dbReference>
<dbReference type="GO" id="GO:0000287">
    <property type="term" value="F:magnesium ion binding"/>
    <property type="evidence" value="ECO:0007669"/>
    <property type="project" value="UniProtKB-UniRule"/>
</dbReference>
<dbReference type="GO" id="GO:0030976">
    <property type="term" value="F:thiamine pyrophosphate binding"/>
    <property type="evidence" value="ECO:0007669"/>
    <property type="project" value="UniProtKB-UniRule"/>
</dbReference>
<dbReference type="GO" id="GO:0052865">
    <property type="term" value="P:1-deoxy-D-xylulose 5-phosphate biosynthetic process"/>
    <property type="evidence" value="ECO:0007669"/>
    <property type="project" value="UniProtKB-UniPathway"/>
</dbReference>
<dbReference type="GO" id="GO:0019288">
    <property type="term" value="P:isopentenyl diphosphate biosynthetic process, methylerythritol 4-phosphate pathway"/>
    <property type="evidence" value="ECO:0007669"/>
    <property type="project" value="TreeGrafter"/>
</dbReference>
<dbReference type="GO" id="GO:0016114">
    <property type="term" value="P:terpenoid biosynthetic process"/>
    <property type="evidence" value="ECO:0007669"/>
    <property type="project" value="UniProtKB-UniRule"/>
</dbReference>
<dbReference type="GO" id="GO:0009228">
    <property type="term" value="P:thiamine biosynthetic process"/>
    <property type="evidence" value="ECO:0007669"/>
    <property type="project" value="UniProtKB-UniRule"/>
</dbReference>
<dbReference type="CDD" id="cd02007">
    <property type="entry name" value="TPP_DXS"/>
    <property type="match status" value="1"/>
</dbReference>
<dbReference type="CDD" id="cd07033">
    <property type="entry name" value="TPP_PYR_DXS_TK_like"/>
    <property type="match status" value="1"/>
</dbReference>
<dbReference type="FunFam" id="3.40.50.920:FF:000002">
    <property type="entry name" value="1-deoxy-D-xylulose-5-phosphate synthase"/>
    <property type="match status" value="1"/>
</dbReference>
<dbReference type="FunFam" id="3.40.50.970:FF:000005">
    <property type="entry name" value="1-deoxy-D-xylulose-5-phosphate synthase"/>
    <property type="match status" value="1"/>
</dbReference>
<dbReference type="Gene3D" id="3.40.50.920">
    <property type="match status" value="1"/>
</dbReference>
<dbReference type="Gene3D" id="3.40.50.970">
    <property type="match status" value="2"/>
</dbReference>
<dbReference type="HAMAP" id="MF_00315">
    <property type="entry name" value="DXP_synth"/>
    <property type="match status" value="1"/>
</dbReference>
<dbReference type="InterPro" id="IPR005477">
    <property type="entry name" value="Dxylulose-5-P_synthase"/>
</dbReference>
<dbReference type="InterPro" id="IPR029061">
    <property type="entry name" value="THDP-binding"/>
</dbReference>
<dbReference type="InterPro" id="IPR009014">
    <property type="entry name" value="Transketo_C/PFOR_II"/>
</dbReference>
<dbReference type="InterPro" id="IPR005475">
    <property type="entry name" value="Transketolase-like_Pyr-bd"/>
</dbReference>
<dbReference type="InterPro" id="IPR020826">
    <property type="entry name" value="Transketolase_BS"/>
</dbReference>
<dbReference type="InterPro" id="IPR033248">
    <property type="entry name" value="Transketolase_C"/>
</dbReference>
<dbReference type="InterPro" id="IPR049557">
    <property type="entry name" value="Transketolase_CS"/>
</dbReference>
<dbReference type="NCBIfam" id="TIGR00204">
    <property type="entry name" value="dxs"/>
    <property type="match status" value="1"/>
</dbReference>
<dbReference type="NCBIfam" id="NF003933">
    <property type="entry name" value="PRK05444.2-2"/>
    <property type="match status" value="1"/>
</dbReference>
<dbReference type="PANTHER" id="PTHR43322">
    <property type="entry name" value="1-D-DEOXYXYLULOSE 5-PHOSPHATE SYNTHASE-RELATED"/>
    <property type="match status" value="1"/>
</dbReference>
<dbReference type="PANTHER" id="PTHR43322:SF5">
    <property type="entry name" value="1-DEOXY-D-XYLULOSE-5-PHOSPHATE SYNTHASE, CHLOROPLASTIC"/>
    <property type="match status" value="1"/>
</dbReference>
<dbReference type="Pfam" id="PF13292">
    <property type="entry name" value="DXP_synthase_N"/>
    <property type="match status" value="1"/>
</dbReference>
<dbReference type="Pfam" id="PF02779">
    <property type="entry name" value="Transket_pyr"/>
    <property type="match status" value="1"/>
</dbReference>
<dbReference type="Pfam" id="PF02780">
    <property type="entry name" value="Transketolase_C"/>
    <property type="match status" value="1"/>
</dbReference>
<dbReference type="SMART" id="SM00861">
    <property type="entry name" value="Transket_pyr"/>
    <property type="match status" value="1"/>
</dbReference>
<dbReference type="SUPFAM" id="SSF52518">
    <property type="entry name" value="Thiamin diphosphate-binding fold (THDP-binding)"/>
    <property type="match status" value="2"/>
</dbReference>
<dbReference type="SUPFAM" id="SSF52922">
    <property type="entry name" value="TK C-terminal domain-like"/>
    <property type="match status" value="1"/>
</dbReference>
<dbReference type="PROSITE" id="PS00801">
    <property type="entry name" value="TRANSKETOLASE_1"/>
    <property type="match status" value="1"/>
</dbReference>
<dbReference type="PROSITE" id="PS00802">
    <property type="entry name" value="TRANSKETOLASE_2"/>
    <property type="match status" value="1"/>
</dbReference>
<protein>
    <recommendedName>
        <fullName evidence="1">1-deoxy-D-xylulose-5-phosphate synthase</fullName>
        <ecNumber evidence="1">2.2.1.7</ecNumber>
    </recommendedName>
    <alternativeName>
        <fullName evidence="1">1-deoxyxylulose-5-phosphate synthase</fullName>
        <shortName evidence="1">DXP synthase</shortName>
        <shortName evidence="1">DXPS</shortName>
    </alternativeName>
</protein>
<keyword id="KW-0414">Isoprene biosynthesis</keyword>
<keyword id="KW-0460">Magnesium</keyword>
<keyword id="KW-0479">Metal-binding</keyword>
<keyword id="KW-0784">Thiamine biosynthesis</keyword>
<keyword id="KW-0786">Thiamine pyrophosphate</keyword>
<keyword id="KW-0808">Transferase</keyword>
<gene>
    <name evidence="1" type="primary">dxs</name>
    <name type="ordered locus">EcolC_3213</name>
</gene>
<evidence type="ECO:0000255" key="1">
    <source>
        <dbReference type="HAMAP-Rule" id="MF_00315"/>
    </source>
</evidence>
<feature type="chain" id="PRO_1000079090" description="1-deoxy-D-xylulose-5-phosphate synthase">
    <location>
        <begin position="1"/>
        <end position="620"/>
    </location>
</feature>
<feature type="binding site" evidence="1">
    <location>
        <position position="80"/>
    </location>
    <ligand>
        <name>thiamine diphosphate</name>
        <dbReference type="ChEBI" id="CHEBI:58937"/>
    </ligand>
</feature>
<feature type="binding site" evidence="1">
    <location>
        <begin position="121"/>
        <end position="123"/>
    </location>
    <ligand>
        <name>thiamine diphosphate</name>
        <dbReference type="ChEBI" id="CHEBI:58937"/>
    </ligand>
</feature>
<feature type="binding site" evidence="1">
    <location>
        <position position="152"/>
    </location>
    <ligand>
        <name>Mg(2+)</name>
        <dbReference type="ChEBI" id="CHEBI:18420"/>
    </ligand>
</feature>
<feature type="binding site" evidence="1">
    <location>
        <begin position="153"/>
        <end position="154"/>
    </location>
    <ligand>
        <name>thiamine diphosphate</name>
        <dbReference type="ChEBI" id="CHEBI:58937"/>
    </ligand>
</feature>
<feature type="binding site" evidence="1">
    <location>
        <position position="181"/>
    </location>
    <ligand>
        <name>Mg(2+)</name>
        <dbReference type="ChEBI" id="CHEBI:18420"/>
    </ligand>
</feature>
<feature type="binding site" evidence="1">
    <location>
        <position position="181"/>
    </location>
    <ligand>
        <name>thiamine diphosphate</name>
        <dbReference type="ChEBI" id="CHEBI:58937"/>
    </ligand>
</feature>
<feature type="binding site" evidence="1">
    <location>
        <position position="288"/>
    </location>
    <ligand>
        <name>thiamine diphosphate</name>
        <dbReference type="ChEBI" id="CHEBI:58937"/>
    </ligand>
</feature>
<feature type="binding site" evidence="1">
    <location>
        <position position="370"/>
    </location>
    <ligand>
        <name>thiamine diphosphate</name>
        <dbReference type="ChEBI" id="CHEBI:58937"/>
    </ligand>
</feature>
<accession>B1J029</accession>
<proteinExistence type="inferred from homology"/>